<sequence length="491" mass="55866">MVFGEFFHRPGQDEELVNLNVGGFKQSVDQSTLLRFPHTRLGKLLTCHSEEAILELCDDYSVADKEYYFDRNPSLFRYVLNFYYTGKLHVMEELCVFSFCQEIEYWGINELFIDSCCSSRYQERKEESHEKDWDQKSNDVSTDSSFEESSLFEKELEKFDELRFGQLRKKIWIRMENPAYCLSAKLIAISSLSVVLASIVAMCVHSMSEFQNEDGEVDDPVLEGVEIACIAWFTGELAIRLVAAPSQKKFWKNPLNIIDFVSIIPFYATLAVDTKEEESEDIENMGKVVQILRLMRIFRILKLARHSVGLRSLGATLRHSYHEVGLLLLFLSVGISIFSVLIYSVEKDELASSLTSIPICWWWATISMTTVGYGDTHPVTLAGKIIASTCIICGILVVALPITIIFNKFSKYYQKQKDMDVDQCSEDPPEKCHELPYFNIRDVYAQQVHAFITSLSSIGIVVSDPDSTDASSVEDNEDAYNTASLENCTAK</sequence>
<accession>O88759</accession>
<accession>O54900</accession>
<proteinExistence type="evidence at protein level"/>
<reference key="1">
    <citation type="journal article" date="1997" name="EMBO J.">
        <title>Kv2.1/Kv9.3, a novel ATP-dependent delayed-rectifier K+ channel in oxygen-sensitive pulmonary artery myocytes.</title>
        <authorList>
            <person name="Patel A.J."/>
            <person name="Lazdunski M."/>
            <person name="Honore E."/>
        </authorList>
    </citation>
    <scope>NUCLEOTIDE SEQUENCE [MRNA]</scope>
    <scope>FUNCTION</scope>
    <scope>SUBUNIT</scope>
    <scope>SUBCELLULAR LOCATION</scope>
    <scope>TISSUE SPECIFICITY</scope>
    <source>
        <tissue>Brain</tissue>
        <tissue>Kidney</tissue>
    </source>
</reference>
<reference key="2">
    <citation type="journal article" date="1998" name="Biochem. Biophys. Res. Commun.">
        <title>Cloning and tissue distribution of two new potassium channel alpha-subunits from rat brain.</title>
        <authorList>
            <person name="Stocker M."/>
            <person name="Kerschensteiner D."/>
        </authorList>
    </citation>
    <scope>NUCLEOTIDE SEQUENCE [MRNA]</scope>
    <scope>TISSUE SPECIFICITY</scope>
    <source>
        <tissue>Brain</tissue>
    </source>
</reference>
<organism>
    <name type="scientific">Rattus norvegicus</name>
    <name type="common">Rat</name>
    <dbReference type="NCBI Taxonomy" id="10116"/>
    <lineage>
        <taxon>Eukaryota</taxon>
        <taxon>Metazoa</taxon>
        <taxon>Chordata</taxon>
        <taxon>Craniata</taxon>
        <taxon>Vertebrata</taxon>
        <taxon>Euteleostomi</taxon>
        <taxon>Mammalia</taxon>
        <taxon>Eutheria</taxon>
        <taxon>Euarchontoglires</taxon>
        <taxon>Glires</taxon>
        <taxon>Rodentia</taxon>
        <taxon>Myomorpha</taxon>
        <taxon>Muroidea</taxon>
        <taxon>Muridae</taxon>
        <taxon>Murinae</taxon>
        <taxon>Rattus</taxon>
    </lineage>
</organism>
<comment type="function">
    <text evidence="3">Potassium channel regulatory subunit that modulates the delayed rectifier potassium channel activity of KCNB1 by namely slowing down the deactivation and inactivation time constants (PubMed:9362476). While it does not form functional channel on its own, it can form functional heterotetrameric channels with KCNB1 (PubMed:9362476).</text>
</comment>
<comment type="subunit">
    <text evidence="2 3">Heterotetramer with KCNB1 (PubMed:9362476). Does not form homomultimers (By similarity).</text>
</comment>
<comment type="subcellular location">
    <subcellularLocation>
        <location evidence="2">Cell membrane</location>
        <topology evidence="2">Multi-pass membrane protein</topology>
    </subcellularLocation>
    <text evidence="2">May not reach the plasma membrane but remain in an intracellular compartment in the absence of KCNB1.</text>
</comment>
<comment type="tissue specificity">
    <text evidence="3 4">Expressed in myocytes (PubMed:9362476). Detected in lung, spleen, brain and heart (PubMed:9704029).</text>
</comment>
<comment type="domain">
    <text evidence="1">The transmembrane segment S4 functions as a voltage-sensor and is characterized by a series of positively charged amino acids at every third position. Channel opening and closing is effected by a conformation change that affects the position and orientation of the voltage-sensor paddle formed by S3 and S4 within the membrane. A transmembrane electric field that is positive inside would push the positively charged S4 segment outwards, thereby opening the pore, while a field that is negative inside would pull the S4 segment inwards and close the pore. Changes in the position and orientation of S4 are then transmitted to the activation gate formed by the inner helix bundle via the S4-S5 linker region.</text>
</comment>
<comment type="similarity">
    <text evidence="6">Belongs to the potassium channel family. S (TC 1.A.1.2) subfamily. Kv9.3/KCNS3 sub-subfamily.</text>
</comment>
<gene>
    <name evidence="7" type="primary">Kcns3</name>
</gene>
<keyword id="KW-1003">Cell membrane</keyword>
<keyword id="KW-0407">Ion channel</keyword>
<keyword id="KW-0406">Ion transport</keyword>
<keyword id="KW-0472">Membrane</keyword>
<keyword id="KW-0630">Potassium</keyword>
<keyword id="KW-0631">Potassium channel</keyword>
<keyword id="KW-0633">Potassium transport</keyword>
<keyword id="KW-1185">Reference proteome</keyword>
<keyword id="KW-0812">Transmembrane</keyword>
<keyword id="KW-1133">Transmembrane helix</keyword>
<keyword id="KW-0813">Transport</keyword>
<keyword id="KW-0851">Voltage-gated channel</keyword>
<evidence type="ECO:0000250" key="1">
    <source>
        <dbReference type="UniProtKB" id="P63142"/>
    </source>
</evidence>
<evidence type="ECO:0000250" key="2">
    <source>
        <dbReference type="UniProtKB" id="Q9BQ31"/>
    </source>
</evidence>
<evidence type="ECO:0000269" key="3">
    <source>
    </source>
</evidence>
<evidence type="ECO:0000269" key="4">
    <source>
    </source>
</evidence>
<evidence type="ECO:0000303" key="5">
    <source>
    </source>
</evidence>
<evidence type="ECO:0000305" key="6"/>
<evidence type="ECO:0000312" key="7">
    <source>
        <dbReference type="RGD" id="621527"/>
    </source>
</evidence>
<dbReference type="EMBL" id="AF029056">
    <property type="protein sequence ID" value="AAB94882.1"/>
    <property type="molecule type" value="mRNA"/>
</dbReference>
<dbReference type="EMBL" id="Y17607">
    <property type="protein sequence ID" value="CAA76805.1"/>
    <property type="molecule type" value="mRNA"/>
</dbReference>
<dbReference type="PIR" id="JE0276">
    <property type="entry name" value="JE0276"/>
</dbReference>
<dbReference type="RefSeq" id="NP_001376159.1">
    <property type="nucleotide sequence ID" value="NM_001389230.1"/>
</dbReference>
<dbReference type="RefSeq" id="NP_113966.2">
    <property type="nucleotide sequence ID" value="NM_031778.2"/>
</dbReference>
<dbReference type="RefSeq" id="XP_038968925.1">
    <property type="nucleotide sequence ID" value="XM_039112997.2"/>
</dbReference>
<dbReference type="RefSeq" id="XP_038968926.1">
    <property type="nucleotide sequence ID" value="XM_039112998.2"/>
</dbReference>
<dbReference type="SMR" id="O88759"/>
<dbReference type="CORUM" id="O88759"/>
<dbReference type="FunCoup" id="O88759">
    <property type="interactions" value="30"/>
</dbReference>
<dbReference type="IntAct" id="O88759">
    <property type="interactions" value="2"/>
</dbReference>
<dbReference type="STRING" id="10116.ENSRNOP00000006499"/>
<dbReference type="PaxDb" id="10116-ENSRNOP00000006499"/>
<dbReference type="Ensembl" id="ENSRNOT00000006499.6">
    <property type="protein sequence ID" value="ENSRNOP00000006499.3"/>
    <property type="gene ID" value="ENSRNOG00000004899.6"/>
</dbReference>
<dbReference type="Ensembl" id="ENSRNOT00000095301.1">
    <property type="protein sequence ID" value="ENSRNOP00000095367.1"/>
    <property type="gene ID" value="ENSRNOG00000004899.6"/>
</dbReference>
<dbReference type="Ensembl" id="ENSRNOT00000108088.1">
    <property type="protein sequence ID" value="ENSRNOP00000080054.1"/>
    <property type="gene ID" value="ENSRNOG00000004899.6"/>
</dbReference>
<dbReference type="Ensembl" id="ENSRNOT00000112607.1">
    <property type="protein sequence ID" value="ENSRNOP00000091305.1"/>
    <property type="gene ID" value="ENSRNOG00000004899.6"/>
</dbReference>
<dbReference type="Ensembl" id="ENSRNOT00000113996.1">
    <property type="protein sequence ID" value="ENSRNOP00000094251.1"/>
    <property type="gene ID" value="ENSRNOG00000004899.6"/>
</dbReference>
<dbReference type="GeneID" id="83588"/>
<dbReference type="KEGG" id="rno:83588"/>
<dbReference type="AGR" id="RGD:621527"/>
<dbReference type="CTD" id="3790"/>
<dbReference type="RGD" id="621527">
    <property type="gene designation" value="Kcns3"/>
</dbReference>
<dbReference type="eggNOG" id="KOG3713">
    <property type="taxonomic scope" value="Eukaryota"/>
</dbReference>
<dbReference type="GeneTree" id="ENSGT00940000155979"/>
<dbReference type="HOGENOM" id="CLU_011722_4_1_1"/>
<dbReference type="InParanoid" id="O88759"/>
<dbReference type="OMA" id="CQELPYF"/>
<dbReference type="OrthoDB" id="296522at2759"/>
<dbReference type="PhylomeDB" id="O88759"/>
<dbReference type="TreeFam" id="TF313103"/>
<dbReference type="Reactome" id="R-RNO-1296072">
    <property type="pathway name" value="Voltage gated Potassium channels"/>
</dbReference>
<dbReference type="Reactome" id="R-RNO-381676">
    <property type="pathway name" value="Glucagon-like Peptide-1 (GLP1) regulates insulin secretion"/>
</dbReference>
<dbReference type="PRO" id="PR:O88759"/>
<dbReference type="Proteomes" id="UP000002494">
    <property type="component" value="Chromosome 6"/>
</dbReference>
<dbReference type="Bgee" id="ENSRNOG00000004899">
    <property type="expression patterns" value="Expressed in lung and 19 other cell types or tissues"/>
</dbReference>
<dbReference type="GO" id="GO:0016020">
    <property type="term" value="C:membrane"/>
    <property type="evidence" value="ECO:0000318"/>
    <property type="project" value="GO_Central"/>
</dbReference>
<dbReference type="GO" id="GO:0008076">
    <property type="term" value="C:voltage-gated potassium channel complex"/>
    <property type="evidence" value="ECO:0000318"/>
    <property type="project" value="GO_Central"/>
</dbReference>
<dbReference type="GO" id="GO:0015459">
    <property type="term" value="F:potassium channel regulator activity"/>
    <property type="evidence" value="ECO:0000318"/>
    <property type="project" value="GO_Central"/>
</dbReference>
<dbReference type="GO" id="GO:0005249">
    <property type="term" value="F:voltage-gated potassium channel activity"/>
    <property type="evidence" value="ECO:0007669"/>
    <property type="project" value="InterPro"/>
</dbReference>
<dbReference type="GO" id="GO:0001508">
    <property type="term" value="P:action potential"/>
    <property type="evidence" value="ECO:0000318"/>
    <property type="project" value="GO_Central"/>
</dbReference>
<dbReference type="GO" id="GO:0071805">
    <property type="term" value="P:potassium ion transmembrane transport"/>
    <property type="evidence" value="ECO:0000318"/>
    <property type="project" value="GO_Central"/>
</dbReference>
<dbReference type="GO" id="GO:0051260">
    <property type="term" value="P:protein homooligomerization"/>
    <property type="evidence" value="ECO:0007669"/>
    <property type="project" value="InterPro"/>
</dbReference>
<dbReference type="CDD" id="cd18428">
    <property type="entry name" value="BTB_POZ_KCNS3"/>
    <property type="match status" value="1"/>
</dbReference>
<dbReference type="FunFam" id="1.10.287.70:FF:000005">
    <property type="entry name" value="potassium voltage-gated channel subfamily G member 1"/>
    <property type="match status" value="1"/>
</dbReference>
<dbReference type="FunFam" id="3.30.710.10:FF:000029">
    <property type="entry name" value="potassium voltage-gated channel subfamily S member 2"/>
    <property type="match status" value="1"/>
</dbReference>
<dbReference type="FunFam" id="1.20.120.350:FF:000045">
    <property type="entry name" value="Potassium voltage-gated channel subfamily S member 3"/>
    <property type="match status" value="1"/>
</dbReference>
<dbReference type="Gene3D" id="1.10.287.70">
    <property type="match status" value="1"/>
</dbReference>
<dbReference type="Gene3D" id="3.30.710.10">
    <property type="entry name" value="Potassium Channel Kv1.1, Chain A"/>
    <property type="match status" value="1"/>
</dbReference>
<dbReference type="Gene3D" id="1.20.120.350">
    <property type="entry name" value="Voltage-gated potassium channels. Chain C"/>
    <property type="match status" value="1"/>
</dbReference>
<dbReference type="InterPro" id="IPR000210">
    <property type="entry name" value="BTB/POZ_dom"/>
</dbReference>
<dbReference type="InterPro" id="IPR005821">
    <property type="entry name" value="Ion_trans_dom"/>
</dbReference>
<dbReference type="InterPro" id="IPR003968">
    <property type="entry name" value="K_chnl_volt-dep_Kv"/>
</dbReference>
<dbReference type="InterPro" id="IPR003971">
    <property type="entry name" value="K_chnl_volt-dep_Kv5/Kv9"/>
</dbReference>
<dbReference type="InterPro" id="IPR011333">
    <property type="entry name" value="SKP1/BTB/POZ_sf"/>
</dbReference>
<dbReference type="InterPro" id="IPR003131">
    <property type="entry name" value="T1-type_BTB"/>
</dbReference>
<dbReference type="InterPro" id="IPR028325">
    <property type="entry name" value="VG_K_chnl"/>
</dbReference>
<dbReference type="InterPro" id="IPR027359">
    <property type="entry name" value="Volt_channel_dom_sf"/>
</dbReference>
<dbReference type="PANTHER" id="PTHR11537:SF39">
    <property type="entry name" value="POTASSIUM VOLTAGE-GATED CHANNEL SUBFAMILY S MEMBER 3"/>
    <property type="match status" value="1"/>
</dbReference>
<dbReference type="PANTHER" id="PTHR11537">
    <property type="entry name" value="VOLTAGE-GATED POTASSIUM CHANNEL"/>
    <property type="match status" value="1"/>
</dbReference>
<dbReference type="Pfam" id="PF02214">
    <property type="entry name" value="BTB_2"/>
    <property type="match status" value="1"/>
</dbReference>
<dbReference type="Pfam" id="PF00520">
    <property type="entry name" value="Ion_trans"/>
    <property type="match status" value="1"/>
</dbReference>
<dbReference type="PRINTS" id="PR00169">
    <property type="entry name" value="KCHANNEL"/>
</dbReference>
<dbReference type="PRINTS" id="PR01494">
    <property type="entry name" value="KV9CHANNEL"/>
</dbReference>
<dbReference type="PRINTS" id="PR01491">
    <property type="entry name" value="KVCHANNEL"/>
</dbReference>
<dbReference type="SMART" id="SM00225">
    <property type="entry name" value="BTB"/>
    <property type="match status" value="1"/>
</dbReference>
<dbReference type="SUPFAM" id="SSF54695">
    <property type="entry name" value="POZ domain"/>
    <property type="match status" value="1"/>
</dbReference>
<dbReference type="SUPFAM" id="SSF81324">
    <property type="entry name" value="Voltage-gated potassium channels"/>
    <property type="match status" value="1"/>
</dbReference>
<feature type="chain" id="PRO_0000054089" description="Delayed-rectifier potassium channel regulatory subunit KCNS3">
    <location>
        <begin position="1"/>
        <end position="491"/>
    </location>
</feature>
<feature type="topological domain" description="Cytoplasmic" evidence="1">
    <location>
        <begin position="1"/>
        <end position="182"/>
    </location>
</feature>
<feature type="transmembrane region" description="Helical; Name=Segment S1" evidence="1">
    <location>
        <begin position="183"/>
        <end position="204"/>
    </location>
</feature>
<feature type="topological domain" description="Extracellular" evidence="1">
    <location>
        <begin position="205"/>
        <end position="220"/>
    </location>
</feature>
<feature type="transmembrane region" description="Helical; Name=Segment S2" evidence="1">
    <location>
        <begin position="221"/>
        <end position="243"/>
    </location>
</feature>
<feature type="topological domain" description="Cytoplasmic" evidence="1">
    <location>
        <begin position="244"/>
        <end position="254"/>
    </location>
</feature>
<feature type="transmembrane region" description="Helical; Name=Segment S3" evidence="1">
    <location>
        <begin position="255"/>
        <end position="275"/>
    </location>
</feature>
<feature type="topological domain" description="Extracellular" evidence="1">
    <location>
        <begin position="276"/>
        <end position="285"/>
    </location>
</feature>
<feature type="transmembrane region" description="Helical; Voltage-sensor; Name=Segment S4" evidence="1">
    <location>
        <begin position="286"/>
        <end position="306"/>
    </location>
</feature>
<feature type="topological domain" description="Cytoplasmic" evidence="1">
    <location>
        <begin position="307"/>
        <end position="321"/>
    </location>
</feature>
<feature type="transmembrane region" description="Helical; Name=Segment S5" evidence="1">
    <location>
        <begin position="322"/>
        <end position="343"/>
    </location>
</feature>
<feature type="topological domain" description="Extracellular" evidence="1">
    <location>
        <begin position="344"/>
        <end position="357"/>
    </location>
</feature>
<feature type="intramembrane region" description="Helical; Name=Pore helix" evidence="1">
    <location>
        <begin position="358"/>
        <end position="369"/>
    </location>
</feature>
<feature type="intramembrane region" evidence="1">
    <location>
        <begin position="370"/>
        <end position="377"/>
    </location>
</feature>
<feature type="topological domain" description="Extracellular" evidence="1">
    <location>
        <begin position="378"/>
        <end position="384"/>
    </location>
</feature>
<feature type="transmembrane region" description="Helical; Name=Segment S6" evidence="1">
    <location>
        <begin position="385"/>
        <end position="413"/>
    </location>
</feature>
<feature type="topological domain" description="Cytoplasmic" evidence="1">
    <location>
        <begin position="414"/>
        <end position="491"/>
    </location>
</feature>
<feature type="short sequence motif" description="Selectivity filter" evidence="1">
    <location>
        <begin position="370"/>
        <end position="375"/>
    </location>
</feature>
<feature type="sequence conflict" description="In Ref. 1; AAB94882." evidence="6" ref="1">
    <original>I</original>
    <variation>F</variation>
    <location>
        <position position="113"/>
    </location>
</feature>
<name>KCNS3_RAT</name>
<protein>
    <recommendedName>
        <fullName evidence="6">Delayed-rectifier potassium channel regulatory subunit KCNS3</fullName>
    </recommendedName>
    <alternativeName>
        <fullName>Delayed-rectifier K(+) channel alpha subunit 3</fullName>
    </alternativeName>
    <alternativeName>
        <fullName evidence="5">Delayed-rectifier potassium channel subunit Kv9.3</fullName>
        <shortName evidence="5">Kv9.3</shortName>
    </alternativeName>
    <alternativeName>
        <fullName>Potassium voltage-gated channel subfamily S member 3</fullName>
    </alternativeName>
</protein>